<dbReference type="EMBL" id="J02708">
    <property type="protein sequence ID" value="AAC13414.1"/>
    <property type="molecule type" value="Genomic_DNA"/>
</dbReference>
<dbReference type="EMBL" id="X13463">
    <property type="protein sequence ID" value="CAA31819.1"/>
    <property type="molecule type" value="Genomic_DNA"/>
</dbReference>
<dbReference type="EMBL" id="U29579">
    <property type="protein sequence ID" value="AAA69215.1"/>
    <property type="molecule type" value="Genomic_DNA"/>
</dbReference>
<dbReference type="EMBL" id="U00096">
    <property type="protein sequence ID" value="AAC75748.1"/>
    <property type="molecule type" value="Genomic_DNA"/>
</dbReference>
<dbReference type="EMBL" id="AP009048">
    <property type="protein sequence ID" value="BAA16567.1"/>
    <property type="molecule type" value="Genomic_DNA"/>
</dbReference>
<dbReference type="PIR" id="S01831">
    <property type="entry name" value="S01831"/>
</dbReference>
<dbReference type="RefSeq" id="NP_417186.1">
    <property type="nucleotide sequence ID" value="NC_000913.3"/>
</dbReference>
<dbReference type="RefSeq" id="WP_000252908.1">
    <property type="nucleotide sequence ID" value="NZ_STEB01000027.1"/>
</dbReference>
<dbReference type="BioGRID" id="4262002">
    <property type="interactions" value="96"/>
</dbReference>
<dbReference type="FunCoup" id="P15081">
    <property type="interactions" value="17"/>
</dbReference>
<dbReference type="STRING" id="511145.b2706"/>
<dbReference type="PaxDb" id="511145-b2706"/>
<dbReference type="EnsemblBacteria" id="AAC75748">
    <property type="protein sequence ID" value="AAC75748"/>
    <property type="gene ID" value="b2706"/>
</dbReference>
<dbReference type="GeneID" id="93779305"/>
<dbReference type="GeneID" id="948938"/>
<dbReference type="KEGG" id="ecj:JW2675"/>
<dbReference type="KEGG" id="eco:b2706"/>
<dbReference type="KEGG" id="ecoc:C3026_14895"/>
<dbReference type="PATRIC" id="fig|511145.12.peg.2797"/>
<dbReference type="EchoBASE" id="EB0965"/>
<dbReference type="eggNOG" id="COG4578">
    <property type="taxonomic scope" value="Bacteria"/>
</dbReference>
<dbReference type="HOGENOM" id="CLU_124480_1_0_6"/>
<dbReference type="InParanoid" id="P15081"/>
<dbReference type="OMA" id="QIALGWW"/>
<dbReference type="OrthoDB" id="4774974at2"/>
<dbReference type="PhylomeDB" id="P15081"/>
<dbReference type="BioCyc" id="EcoCyc:PD00345"/>
<dbReference type="PRO" id="PR:P15081"/>
<dbReference type="Proteomes" id="UP000000625">
    <property type="component" value="Chromosome"/>
</dbReference>
<dbReference type="GO" id="GO:0003677">
    <property type="term" value="F:DNA binding"/>
    <property type="evidence" value="ECO:0007669"/>
    <property type="project" value="UniProtKB-KW"/>
</dbReference>
<dbReference type="GO" id="GO:0009401">
    <property type="term" value="P:phosphoenolpyruvate-dependent sugar phosphotransferase system"/>
    <property type="evidence" value="ECO:0007669"/>
    <property type="project" value="UniProtKB-KW"/>
</dbReference>
<dbReference type="GO" id="GO:0006355">
    <property type="term" value="P:regulation of DNA-templated transcription"/>
    <property type="evidence" value="ECO:0000315"/>
    <property type="project" value="EcoCyc"/>
</dbReference>
<dbReference type="InterPro" id="IPR009693">
    <property type="entry name" value="Glucitol_operon_activator"/>
</dbReference>
<dbReference type="NCBIfam" id="NF007592">
    <property type="entry name" value="PRK10234.1"/>
    <property type="match status" value="1"/>
</dbReference>
<dbReference type="Pfam" id="PF06923">
    <property type="entry name" value="GutM"/>
    <property type="match status" value="1"/>
</dbReference>
<dbReference type="PIRSF" id="PIRSF011474">
    <property type="entry name" value="Glucitol_operon_activator"/>
    <property type="match status" value="1"/>
</dbReference>
<feature type="chain" id="PRO_0000083878" description="Glucitol operon activator protein">
    <location>
        <begin position="1"/>
        <end position="119"/>
    </location>
</feature>
<feature type="DNA-binding region" description="H-T-H motif" evidence="1">
    <location>
        <begin position="23"/>
        <end position="29"/>
    </location>
</feature>
<sequence length="119" mass="12953">MVSALITVAVIAWCAQLALGGWQISRFNRAFDTLCQQGRVGVGRSSGRFKPRVVVAIALDDQQRIVDTLFMKGLTVFARPQKIPAITGMHAGDLQPDVIFPHDPLSQNALSLALKLKRG</sequence>
<comment type="function">
    <text>Positive regulator for glucitol operon expression.</text>
</comment>
<accession>P15081</accession>
<reference key="1">
    <citation type="journal article" date="1988" name="J. Mol. Biol.">
        <title>Positive and negative regulators for glucitol (gut) operon expression in Escherichia coli.</title>
        <authorList>
            <person name="Yamada M."/>
            <person name="Saier M.H. Jr."/>
        </authorList>
    </citation>
    <scope>NUCLEOTIDE SEQUENCE [GENOMIC DNA]</scope>
</reference>
<reference key="2">
    <citation type="journal article" date="1997" name="DNA Res.">
        <title>Construction of a contiguous 874-kb sequence of the Escherichia coli-K12 genome corresponding to 50.0-68.8 min on the linkage map and analysis of its sequence features.</title>
        <authorList>
            <person name="Yamamoto Y."/>
            <person name="Aiba H."/>
            <person name="Baba T."/>
            <person name="Hayashi K."/>
            <person name="Inada T."/>
            <person name="Isono K."/>
            <person name="Itoh T."/>
            <person name="Kimura S."/>
            <person name="Kitagawa M."/>
            <person name="Makino K."/>
            <person name="Miki T."/>
            <person name="Mitsuhashi N."/>
            <person name="Mizobuchi K."/>
            <person name="Mori H."/>
            <person name="Nakade S."/>
            <person name="Nakamura Y."/>
            <person name="Nashimoto H."/>
            <person name="Oshima T."/>
            <person name="Oyama S."/>
            <person name="Saito N."/>
            <person name="Sampei G."/>
            <person name="Satoh Y."/>
            <person name="Sivasundaram S."/>
            <person name="Tagami H."/>
            <person name="Takahashi H."/>
            <person name="Takeda J."/>
            <person name="Takemoto K."/>
            <person name="Uehara K."/>
            <person name="Wada C."/>
            <person name="Yamagata S."/>
            <person name="Horiuchi T."/>
        </authorList>
    </citation>
    <scope>NUCLEOTIDE SEQUENCE [LARGE SCALE GENOMIC DNA]</scope>
    <source>
        <strain>K12 / W3110 / ATCC 27325 / DSM 5911</strain>
    </source>
</reference>
<reference key="3">
    <citation type="journal article" date="1997" name="Science">
        <title>The complete genome sequence of Escherichia coli K-12.</title>
        <authorList>
            <person name="Blattner F.R."/>
            <person name="Plunkett G. III"/>
            <person name="Bloch C.A."/>
            <person name="Perna N.T."/>
            <person name="Burland V."/>
            <person name="Riley M."/>
            <person name="Collado-Vides J."/>
            <person name="Glasner J.D."/>
            <person name="Rode C.K."/>
            <person name="Mayhew G.F."/>
            <person name="Gregor J."/>
            <person name="Davis N.W."/>
            <person name="Kirkpatrick H.A."/>
            <person name="Goeden M.A."/>
            <person name="Rose D.J."/>
            <person name="Mau B."/>
            <person name="Shao Y."/>
        </authorList>
    </citation>
    <scope>NUCLEOTIDE SEQUENCE [LARGE SCALE GENOMIC DNA]</scope>
    <source>
        <strain>K12 / MG1655 / ATCC 47076</strain>
    </source>
</reference>
<reference key="4">
    <citation type="journal article" date="2006" name="Mol. Syst. Biol.">
        <title>Highly accurate genome sequences of Escherichia coli K-12 strains MG1655 and W3110.</title>
        <authorList>
            <person name="Hayashi K."/>
            <person name="Morooka N."/>
            <person name="Yamamoto Y."/>
            <person name="Fujita K."/>
            <person name="Isono K."/>
            <person name="Choi S."/>
            <person name="Ohtsubo E."/>
            <person name="Baba T."/>
            <person name="Wanner B.L."/>
            <person name="Mori H."/>
            <person name="Horiuchi T."/>
        </authorList>
    </citation>
    <scope>NUCLEOTIDE SEQUENCE [LARGE SCALE GENOMIC DNA]</scope>
    <source>
        <strain>K12 / W3110 / ATCC 27325 / DSM 5911</strain>
    </source>
</reference>
<protein>
    <recommendedName>
        <fullName>Glucitol operon activator protein</fullName>
    </recommendedName>
</protein>
<organism>
    <name type="scientific">Escherichia coli (strain K12)</name>
    <dbReference type="NCBI Taxonomy" id="83333"/>
    <lineage>
        <taxon>Bacteria</taxon>
        <taxon>Pseudomonadati</taxon>
        <taxon>Pseudomonadota</taxon>
        <taxon>Gammaproteobacteria</taxon>
        <taxon>Enterobacterales</taxon>
        <taxon>Enterobacteriaceae</taxon>
        <taxon>Escherichia</taxon>
    </lineage>
</organism>
<proteinExistence type="predicted"/>
<evidence type="ECO:0000255" key="1"/>
<keyword id="KW-0010">Activator</keyword>
<keyword id="KW-0238">DNA-binding</keyword>
<keyword id="KW-0598">Phosphotransferase system</keyword>
<keyword id="KW-1185">Reference proteome</keyword>
<keyword id="KW-0804">Transcription</keyword>
<keyword id="KW-0805">Transcription regulation</keyword>
<gene>
    <name type="primary">gutM</name>
    <name type="synonym">srlM</name>
    <name type="ordered locus">b2706</name>
    <name type="ordered locus">JW2675</name>
</gene>
<name>GUTM_ECOLI</name>